<gene>
    <name evidence="1" type="primary">nuoB1</name>
    <name type="ordered locus">Oter_0485</name>
</gene>
<organism>
    <name type="scientific">Opitutus terrae (strain DSM 11246 / JCM 15787 / PB90-1)</name>
    <dbReference type="NCBI Taxonomy" id="452637"/>
    <lineage>
        <taxon>Bacteria</taxon>
        <taxon>Pseudomonadati</taxon>
        <taxon>Verrucomicrobiota</taxon>
        <taxon>Opitutia</taxon>
        <taxon>Opitutales</taxon>
        <taxon>Opitutaceae</taxon>
        <taxon>Opitutus</taxon>
    </lineage>
</organism>
<accession>B1ZRT2</accession>
<protein>
    <recommendedName>
        <fullName evidence="1">NADH-quinone oxidoreductase subunit B 1</fullName>
        <ecNumber evidence="1">7.1.1.-</ecNumber>
    </recommendedName>
    <alternativeName>
        <fullName evidence="1">NADH dehydrogenase I subunit B 1</fullName>
    </alternativeName>
    <alternativeName>
        <fullName evidence="1">NDH-1 subunit B 1</fullName>
    </alternativeName>
</protein>
<sequence length="171" mass="18796">MVSSNTDLTYSSAIEGGIVVSKADAVINWIRTNSMWPMPMGLACCAIELMQVGNGRFDIARFGAEVMRFSPRQSDCMIVAGSVTYKMAPQIRRIYDQMMSPKWVIAMGACASSGGMYRSYAHMQGVDRILPVDVYISGCPPRPEGILDALMKLQAKIRTERAGQNLFKATV</sequence>
<dbReference type="EC" id="7.1.1.-" evidence="1"/>
<dbReference type="EMBL" id="CP001032">
    <property type="protein sequence ID" value="ACB73775.1"/>
    <property type="molecule type" value="Genomic_DNA"/>
</dbReference>
<dbReference type="RefSeq" id="WP_012373313.1">
    <property type="nucleotide sequence ID" value="NC_010571.1"/>
</dbReference>
<dbReference type="SMR" id="B1ZRT2"/>
<dbReference type="STRING" id="452637.Oter_0485"/>
<dbReference type="KEGG" id="ote:Oter_0485"/>
<dbReference type="eggNOG" id="COG0377">
    <property type="taxonomic scope" value="Bacteria"/>
</dbReference>
<dbReference type="HOGENOM" id="CLU_055737_7_3_0"/>
<dbReference type="OrthoDB" id="9786737at2"/>
<dbReference type="Proteomes" id="UP000007013">
    <property type="component" value="Chromosome"/>
</dbReference>
<dbReference type="GO" id="GO:0005886">
    <property type="term" value="C:plasma membrane"/>
    <property type="evidence" value="ECO:0007669"/>
    <property type="project" value="UniProtKB-SubCell"/>
</dbReference>
<dbReference type="GO" id="GO:0045271">
    <property type="term" value="C:respiratory chain complex I"/>
    <property type="evidence" value="ECO:0007669"/>
    <property type="project" value="TreeGrafter"/>
</dbReference>
<dbReference type="GO" id="GO:0051539">
    <property type="term" value="F:4 iron, 4 sulfur cluster binding"/>
    <property type="evidence" value="ECO:0007669"/>
    <property type="project" value="UniProtKB-KW"/>
</dbReference>
<dbReference type="GO" id="GO:0005506">
    <property type="term" value="F:iron ion binding"/>
    <property type="evidence" value="ECO:0007669"/>
    <property type="project" value="UniProtKB-UniRule"/>
</dbReference>
<dbReference type="GO" id="GO:0008137">
    <property type="term" value="F:NADH dehydrogenase (ubiquinone) activity"/>
    <property type="evidence" value="ECO:0007669"/>
    <property type="project" value="InterPro"/>
</dbReference>
<dbReference type="GO" id="GO:0050136">
    <property type="term" value="F:NADH:ubiquinone reductase (non-electrogenic) activity"/>
    <property type="evidence" value="ECO:0007669"/>
    <property type="project" value="UniProtKB-UniRule"/>
</dbReference>
<dbReference type="GO" id="GO:0048038">
    <property type="term" value="F:quinone binding"/>
    <property type="evidence" value="ECO:0007669"/>
    <property type="project" value="UniProtKB-KW"/>
</dbReference>
<dbReference type="GO" id="GO:0009060">
    <property type="term" value="P:aerobic respiration"/>
    <property type="evidence" value="ECO:0007669"/>
    <property type="project" value="TreeGrafter"/>
</dbReference>
<dbReference type="GO" id="GO:0015990">
    <property type="term" value="P:electron transport coupled proton transport"/>
    <property type="evidence" value="ECO:0007669"/>
    <property type="project" value="TreeGrafter"/>
</dbReference>
<dbReference type="FunFam" id="3.40.50.12280:FF:000002">
    <property type="entry name" value="NADH-quinone oxidoreductase subunit B"/>
    <property type="match status" value="1"/>
</dbReference>
<dbReference type="Gene3D" id="3.40.50.12280">
    <property type="match status" value="1"/>
</dbReference>
<dbReference type="HAMAP" id="MF_01356">
    <property type="entry name" value="NDH1_NuoB"/>
    <property type="match status" value="1"/>
</dbReference>
<dbReference type="InterPro" id="IPR006137">
    <property type="entry name" value="NADH_UbQ_OxRdtase-like_20kDa"/>
</dbReference>
<dbReference type="InterPro" id="IPR006138">
    <property type="entry name" value="NADH_UQ_OxRdtase_20Kd_su"/>
</dbReference>
<dbReference type="NCBIfam" id="TIGR01957">
    <property type="entry name" value="nuoB_fam"/>
    <property type="match status" value="1"/>
</dbReference>
<dbReference type="NCBIfam" id="NF005012">
    <property type="entry name" value="PRK06411.1"/>
    <property type="match status" value="1"/>
</dbReference>
<dbReference type="NCBIfam" id="NF011390">
    <property type="entry name" value="PRK14815.1"/>
    <property type="match status" value="1"/>
</dbReference>
<dbReference type="PANTHER" id="PTHR11995">
    <property type="entry name" value="NADH DEHYDROGENASE"/>
    <property type="match status" value="1"/>
</dbReference>
<dbReference type="PANTHER" id="PTHR11995:SF14">
    <property type="entry name" value="NADH DEHYDROGENASE [UBIQUINONE] IRON-SULFUR PROTEIN 7, MITOCHONDRIAL"/>
    <property type="match status" value="1"/>
</dbReference>
<dbReference type="Pfam" id="PF01058">
    <property type="entry name" value="Oxidored_q6"/>
    <property type="match status" value="1"/>
</dbReference>
<dbReference type="SUPFAM" id="SSF56770">
    <property type="entry name" value="HydA/Nqo6-like"/>
    <property type="match status" value="1"/>
</dbReference>
<comment type="function">
    <text evidence="1">NDH-1 shuttles electrons from NADH, via FMN and iron-sulfur (Fe-S) centers, to quinones in the respiratory chain. The immediate electron acceptor for the enzyme in this species is believed to be ubiquinone. Couples the redox reaction to proton translocation (for every two electrons transferred, four hydrogen ions are translocated across the cytoplasmic membrane), and thus conserves the redox energy in a proton gradient.</text>
</comment>
<comment type="catalytic activity">
    <reaction evidence="1">
        <text>a quinone + NADH + 5 H(+)(in) = a quinol + NAD(+) + 4 H(+)(out)</text>
        <dbReference type="Rhea" id="RHEA:57888"/>
        <dbReference type="ChEBI" id="CHEBI:15378"/>
        <dbReference type="ChEBI" id="CHEBI:24646"/>
        <dbReference type="ChEBI" id="CHEBI:57540"/>
        <dbReference type="ChEBI" id="CHEBI:57945"/>
        <dbReference type="ChEBI" id="CHEBI:132124"/>
    </reaction>
</comment>
<comment type="cofactor">
    <cofactor evidence="1">
        <name>[4Fe-4S] cluster</name>
        <dbReference type="ChEBI" id="CHEBI:49883"/>
    </cofactor>
    <text evidence="1">Binds 1 [4Fe-4S] cluster.</text>
</comment>
<comment type="subunit">
    <text evidence="1">NDH-1 is composed of 14 different subunits. Subunits NuoB, C, D, E, F, and G constitute the peripheral sector of the complex.</text>
</comment>
<comment type="subcellular location">
    <subcellularLocation>
        <location evidence="1">Cell inner membrane</location>
        <topology evidence="1">Peripheral membrane protein</topology>
        <orientation evidence="1">Cytoplasmic side</orientation>
    </subcellularLocation>
</comment>
<comment type="similarity">
    <text evidence="1">Belongs to the complex I 20 kDa subunit family.</text>
</comment>
<reference key="1">
    <citation type="journal article" date="2011" name="J. Bacteriol.">
        <title>Genome sequence of the verrucomicrobium Opitutus terrae PB90-1, an abundant inhabitant of rice paddy soil ecosystems.</title>
        <authorList>
            <person name="van Passel M.W."/>
            <person name="Kant R."/>
            <person name="Palva A."/>
            <person name="Copeland A."/>
            <person name="Lucas S."/>
            <person name="Lapidus A."/>
            <person name="Glavina del Rio T."/>
            <person name="Pitluck S."/>
            <person name="Goltsman E."/>
            <person name="Clum A."/>
            <person name="Sun H."/>
            <person name="Schmutz J."/>
            <person name="Larimer F.W."/>
            <person name="Land M.L."/>
            <person name="Hauser L."/>
            <person name="Kyrpides N."/>
            <person name="Mikhailova N."/>
            <person name="Richardson P.P."/>
            <person name="Janssen P.H."/>
            <person name="de Vos W.M."/>
            <person name="Smidt H."/>
        </authorList>
    </citation>
    <scope>NUCLEOTIDE SEQUENCE [LARGE SCALE GENOMIC DNA]</scope>
    <source>
        <strain>DSM 11246 / JCM 15787 / PB90-1</strain>
    </source>
</reference>
<evidence type="ECO:0000255" key="1">
    <source>
        <dbReference type="HAMAP-Rule" id="MF_01356"/>
    </source>
</evidence>
<proteinExistence type="inferred from homology"/>
<name>NUOB1_OPITP</name>
<feature type="chain" id="PRO_0000376296" description="NADH-quinone oxidoreductase subunit B 1">
    <location>
        <begin position="1"/>
        <end position="171"/>
    </location>
</feature>
<feature type="binding site" evidence="1">
    <location>
        <position position="44"/>
    </location>
    <ligand>
        <name>[4Fe-4S] cluster</name>
        <dbReference type="ChEBI" id="CHEBI:49883"/>
    </ligand>
</feature>
<feature type="binding site" evidence="1">
    <location>
        <position position="45"/>
    </location>
    <ligand>
        <name>[4Fe-4S] cluster</name>
        <dbReference type="ChEBI" id="CHEBI:49883"/>
    </ligand>
</feature>
<feature type="binding site" evidence="1">
    <location>
        <position position="110"/>
    </location>
    <ligand>
        <name>[4Fe-4S] cluster</name>
        <dbReference type="ChEBI" id="CHEBI:49883"/>
    </ligand>
</feature>
<feature type="binding site" evidence="1">
    <location>
        <position position="139"/>
    </location>
    <ligand>
        <name>[4Fe-4S] cluster</name>
        <dbReference type="ChEBI" id="CHEBI:49883"/>
    </ligand>
</feature>
<keyword id="KW-0004">4Fe-4S</keyword>
<keyword id="KW-0997">Cell inner membrane</keyword>
<keyword id="KW-1003">Cell membrane</keyword>
<keyword id="KW-0408">Iron</keyword>
<keyword id="KW-0411">Iron-sulfur</keyword>
<keyword id="KW-0472">Membrane</keyword>
<keyword id="KW-0479">Metal-binding</keyword>
<keyword id="KW-0520">NAD</keyword>
<keyword id="KW-0874">Quinone</keyword>
<keyword id="KW-1185">Reference proteome</keyword>
<keyword id="KW-1278">Translocase</keyword>
<keyword id="KW-0813">Transport</keyword>
<keyword id="KW-0830">Ubiquinone</keyword>